<reference key="1">
    <citation type="submission" date="2006-06" db="EMBL/GenBank/DDBJ databases">
        <title>Complete sequence of chromosome of Mycobacterium sp. MCS.</title>
        <authorList>
            <consortium name="US DOE Joint Genome Institute"/>
            <person name="Copeland A."/>
            <person name="Lucas S."/>
            <person name="Lapidus A."/>
            <person name="Barry K."/>
            <person name="Detter J.C."/>
            <person name="Glavina del Rio T."/>
            <person name="Hammon N."/>
            <person name="Israni S."/>
            <person name="Dalin E."/>
            <person name="Tice H."/>
            <person name="Pitluck S."/>
            <person name="Martinez M."/>
            <person name="Schmutz J."/>
            <person name="Larimer F."/>
            <person name="Land M."/>
            <person name="Hauser L."/>
            <person name="Kyrpides N."/>
            <person name="Kim E."/>
            <person name="Miller C.D."/>
            <person name="Hughes J.E."/>
            <person name="Anderson A.J."/>
            <person name="Sims R.C."/>
            <person name="Richardson P."/>
        </authorList>
    </citation>
    <scope>NUCLEOTIDE SEQUENCE [LARGE SCALE GENOMIC DNA]</scope>
    <source>
        <strain>MCS</strain>
    </source>
</reference>
<accession>Q1BDD4</accession>
<proteinExistence type="inferred from homology"/>
<gene>
    <name evidence="1" type="primary">fusA</name>
    <name type="ordered locus">Mmcs_0986</name>
</gene>
<evidence type="ECO:0000255" key="1">
    <source>
        <dbReference type="HAMAP-Rule" id="MF_00054"/>
    </source>
</evidence>
<sequence length="701" mass="77368">MAQKDVLTDLNKVRNIGIMAHIDAGKTTTTERILYYTGVNYKIGETHDGASTTDWMEQEQERGITITSAAVTCFWNDNQINIIDTPGHVDFTVEVERSLRVLDGAVAVFDGKEGVEPQSEQVWRQADKYDVPRICFVNKMDKLGADFYFTVRTIEERLGATPLVIQLPIGAENDFIGIIDLVEMKAKVWRGETALGEKYEVEDIPAELADKADEYRTKLLEAVAETDEALLEKYFGGEELTVEEIKGAIRKLTVNSELYPVLCGSAFKNKGVQPMLDAVVDYLPSPLDVESVQGHVPNKEDELITRKPSVDEPFSALAFKIAVHPFFGKLTYVRVYSGTVESGSQVINSTKGKKERLGKLFQMHANKENPVERASAGHIYAVIGLKDTTTGDTLSDANQQIVLESMTFPDPVIEVAIEPKTKSDQEKLGTAIQKLAEEDPTFKVHLDQETGQTVIGGMGELHLDILVDRMRREFKVEANVGKPQVAYRETIKRKVEKVEFTHKKQTGGSGQFAKVLIDLEPFSGEDGATYEFENKVTGGRIPREYIPSVDAGAQDAMQYGVLAGYPLVNVKVTLLDGAYHEVDSSEMAFKVAGSQVLKKAAQAAQPVILEPIMAVEVTTPEDYMGEVIGDLNSRRGQIQAMEERAGARVVKAQVPLSEMFGYVGDLRSKTQGRANYSMVFDSYAEVPANVSKEIIAKATGQ</sequence>
<name>EFG_MYCSS</name>
<organism>
    <name type="scientific">Mycobacterium sp. (strain MCS)</name>
    <dbReference type="NCBI Taxonomy" id="164756"/>
    <lineage>
        <taxon>Bacteria</taxon>
        <taxon>Bacillati</taxon>
        <taxon>Actinomycetota</taxon>
        <taxon>Actinomycetes</taxon>
        <taxon>Mycobacteriales</taxon>
        <taxon>Mycobacteriaceae</taxon>
        <taxon>Mycobacterium</taxon>
    </lineage>
</organism>
<feature type="chain" id="PRO_0000263471" description="Elongation factor G">
    <location>
        <begin position="1"/>
        <end position="701"/>
    </location>
</feature>
<feature type="domain" description="tr-type G">
    <location>
        <begin position="11"/>
        <end position="287"/>
    </location>
</feature>
<feature type="binding site" evidence="1">
    <location>
        <begin position="20"/>
        <end position="27"/>
    </location>
    <ligand>
        <name>GTP</name>
        <dbReference type="ChEBI" id="CHEBI:37565"/>
    </ligand>
</feature>
<feature type="binding site" evidence="1">
    <location>
        <begin position="84"/>
        <end position="88"/>
    </location>
    <ligand>
        <name>GTP</name>
        <dbReference type="ChEBI" id="CHEBI:37565"/>
    </ligand>
</feature>
<feature type="binding site" evidence="1">
    <location>
        <begin position="138"/>
        <end position="141"/>
    </location>
    <ligand>
        <name>GTP</name>
        <dbReference type="ChEBI" id="CHEBI:37565"/>
    </ligand>
</feature>
<comment type="function">
    <text evidence="1">Catalyzes the GTP-dependent ribosomal translocation step during translation elongation. During this step, the ribosome changes from the pre-translocational (PRE) to the post-translocational (POST) state as the newly formed A-site-bound peptidyl-tRNA and P-site-bound deacylated tRNA move to the P and E sites, respectively. Catalyzes the coordinated movement of the two tRNA molecules, the mRNA and conformational changes in the ribosome.</text>
</comment>
<comment type="subcellular location">
    <subcellularLocation>
        <location evidence="1">Cytoplasm</location>
    </subcellularLocation>
</comment>
<comment type="similarity">
    <text evidence="1">Belongs to the TRAFAC class translation factor GTPase superfamily. Classic translation factor GTPase family. EF-G/EF-2 subfamily.</text>
</comment>
<protein>
    <recommendedName>
        <fullName evidence="1">Elongation factor G</fullName>
        <shortName evidence="1">EF-G</shortName>
    </recommendedName>
</protein>
<dbReference type="EMBL" id="CP000384">
    <property type="protein sequence ID" value="ABG07100.1"/>
    <property type="molecule type" value="Genomic_DNA"/>
</dbReference>
<dbReference type="SMR" id="Q1BDD4"/>
<dbReference type="KEGG" id="mmc:Mmcs_0986"/>
<dbReference type="HOGENOM" id="CLU_002794_4_1_11"/>
<dbReference type="BioCyc" id="MSP164756:G1G6O-1010-MONOMER"/>
<dbReference type="GO" id="GO:0005737">
    <property type="term" value="C:cytoplasm"/>
    <property type="evidence" value="ECO:0007669"/>
    <property type="project" value="UniProtKB-SubCell"/>
</dbReference>
<dbReference type="GO" id="GO:0005525">
    <property type="term" value="F:GTP binding"/>
    <property type="evidence" value="ECO:0007669"/>
    <property type="project" value="UniProtKB-UniRule"/>
</dbReference>
<dbReference type="GO" id="GO:0003924">
    <property type="term" value="F:GTPase activity"/>
    <property type="evidence" value="ECO:0007669"/>
    <property type="project" value="InterPro"/>
</dbReference>
<dbReference type="GO" id="GO:0003746">
    <property type="term" value="F:translation elongation factor activity"/>
    <property type="evidence" value="ECO:0007669"/>
    <property type="project" value="UniProtKB-UniRule"/>
</dbReference>
<dbReference type="GO" id="GO:0032790">
    <property type="term" value="P:ribosome disassembly"/>
    <property type="evidence" value="ECO:0007669"/>
    <property type="project" value="TreeGrafter"/>
</dbReference>
<dbReference type="CDD" id="cd01886">
    <property type="entry name" value="EF-G"/>
    <property type="match status" value="1"/>
</dbReference>
<dbReference type="CDD" id="cd16262">
    <property type="entry name" value="EFG_III"/>
    <property type="match status" value="1"/>
</dbReference>
<dbReference type="CDD" id="cd01434">
    <property type="entry name" value="EFG_mtEFG1_IV"/>
    <property type="match status" value="1"/>
</dbReference>
<dbReference type="CDD" id="cd03713">
    <property type="entry name" value="EFG_mtEFG_C"/>
    <property type="match status" value="1"/>
</dbReference>
<dbReference type="CDD" id="cd04088">
    <property type="entry name" value="EFG_mtEFG_II"/>
    <property type="match status" value="1"/>
</dbReference>
<dbReference type="FunFam" id="2.40.30.10:FF:000006">
    <property type="entry name" value="Elongation factor G"/>
    <property type="match status" value="1"/>
</dbReference>
<dbReference type="FunFam" id="3.30.230.10:FF:000003">
    <property type="entry name" value="Elongation factor G"/>
    <property type="match status" value="1"/>
</dbReference>
<dbReference type="FunFam" id="3.30.70.240:FF:000001">
    <property type="entry name" value="Elongation factor G"/>
    <property type="match status" value="1"/>
</dbReference>
<dbReference type="FunFam" id="3.30.70.870:FF:000001">
    <property type="entry name" value="Elongation factor G"/>
    <property type="match status" value="1"/>
</dbReference>
<dbReference type="FunFam" id="3.40.50.300:FF:000029">
    <property type="entry name" value="Elongation factor G"/>
    <property type="match status" value="1"/>
</dbReference>
<dbReference type="Gene3D" id="3.30.230.10">
    <property type="match status" value="1"/>
</dbReference>
<dbReference type="Gene3D" id="3.30.70.240">
    <property type="match status" value="1"/>
</dbReference>
<dbReference type="Gene3D" id="3.30.70.870">
    <property type="entry name" value="Elongation Factor G (Translational Gtpase), domain 3"/>
    <property type="match status" value="1"/>
</dbReference>
<dbReference type="Gene3D" id="3.40.50.300">
    <property type="entry name" value="P-loop containing nucleotide triphosphate hydrolases"/>
    <property type="match status" value="1"/>
</dbReference>
<dbReference type="Gene3D" id="2.40.30.10">
    <property type="entry name" value="Translation factors"/>
    <property type="match status" value="1"/>
</dbReference>
<dbReference type="HAMAP" id="MF_00054_B">
    <property type="entry name" value="EF_G_EF_2_B"/>
    <property type="match status" value="1"/>
</dbReference>
<dbReference type="InterPro" id="IPR041095">
    <property type="entry name" value="EFG_II"/>
</dbReference>
<dbReference type="InterPro" id="IPR009022">
    <property type="entry name" value="EFG_III"/>
</dbReference>
<dbReference type="InterPro" id="IPR035647">
    <property type="entry name" value="EFG_III/V"/>
</dbReference>
<dbReference type="InterPro" id="IPR047872">
    <property type="entry name" value="EFG_IV"/>
</dbReference>
<dbReference type="InterPro" id="IPR035649">
    <property type="entry name" value="EFG_V"/>
</dbReference>
<dbReference type="InterPro" id="IPR000640">
    <property type="entry name" value="EFG_V-like"/>
</dbReference>
<dbReference type="InterPro" id="IPR004161">
    <property type="entry name" value="EFTu-like_2"/>
</dbReference>
<dbReference type="InterPro" id="IPR031157">
    <property type="entry name" value="G_TR_CS"/>
</dbReference>
<dbReference type="InterPro" id="IPR027417">
    <property type="entry name" value="P-loop_NTPase"/>
</dbReference>
<dbReference type="InterPro" id="IPR020568">
    <property type="entry name" value="Ribosomal_Su5_D2-typ_SF"/>
</dbReference>
<dbReference type="InterPro" id="IPR014721">
    <property type="entry name" value="Ribsml_uS5_D2-typ_fold_subgr"/>
</dbReference>
<dbReference type="InterPro" id="IPR005225">
    <property type="entry name" value="Small_GTP-bd"/>
</dbReference>
<dbReference type="InterPro" id="IPR000795">
    <property type="entry name" value="T_Tr_GTP-bd_dom"/>
</dbReference>
<dbReference type="InterPro" id="IPR009000">
    <property type="entry name" value="Transl_B-barrel_sf"/>
</dbReference>
<dbReference type="InterPro" id="IPR004540">
    <property type="entry name" value="Transl_elong_EFG/EF2"/>
</dbReference>
<dbReference type="InterPro" id="IPR005517">
    <property type="entry name" value="Transl_elong_EFG/EF2_IV"/>
</dbReference>
<dbReference type="NCBIfam" id="TIGR00484">
    <property type="entry name" value="EF-G"/>
    <property type="match status" value="1"/>
</dbReference>
<dbReference type="NCBIfam" id="NF009381">
    <property type="entry name" value="PRK12740.1-5"/>
    <property type="match status" value="1"/>
</dbReference>
<dbReference type="NCBIfam" id="TIGR00231">
    <property type="entry name" value="small_GTP"/>
    <property type="match status" value="1"/>
</dbReference>
<dbReference type="PANTHER" id="PTHR43261:SF1">
    <property type="entry name" value="RIBOSOME-RELEASING FACTOR 2, MITOCHONDRIAL"/>
    <property type="match status" value="1"/>
</dbReference>
<dbReference type="PANTHER" id="PTHR43261">
    <property type="entry name" value="TRANSLATION ELONGATION FACTOR G-RELATED"/>
    <property type="match status" value="1"/>
</dbReference>
<dbReference type="Pfam" id="PF00679">
    <property type="entry name" value="EFG_C"/>
    <property type="match status" value="1"/>
</dbReference>
<dbReference type="Pfam" id="PF14492">
    <property type="entry name" value="EFG_III"/>
    <property type="match status" value="1"/>
</dbReference>
<dbReference type="Pfam" id="PF03764">
    <property type="entry name" value="EFG_IV"/>
    <property type="match status" value="1"/>
</dbReference>
<dbReference type="Pfam" id="PF00009">
    <property type="entry name" value="GTP_EFTU"/>
    <property type="match status" value="1"/>
</dbReference>
<dbReference type="Pfam" id="PF03144">
    <property type="entry name" value="GTP_EFTU_D2"/>
    <property type="match status" value="1"/>
</dbReference>
<dbReference type="PRINTS" id="PR00315">
    <property type="entry name" value="ELONGATNFCT"/>
</dbReference>
<dbReference type="SMART" id="SM00838">
    <property type="entry name" value="EFG_C"/>
    <property type="match status" value="1"/>
</dbReference>
<dbReference type="SMART" id="SM00889">
    <property type="entry name" value="EFG_IV"/>
    <property type="match status" value="1"/>
</dbReference>
<dbReference type="SUPFAM" id="SSF54980">
    <property type="entry name" value="EF-G C-terminal domain-like"/>
    <property type="match status" value="2"/>
</dbReference>
<dbReference type="SUPFAM" id="SSF52540">
    <property type="entry name" value="P-loop containing nucleoside triphosphate hydrolases"/>
    <property type="match status" value="1"/>
</dbReference>
<dbReference type="SUPFAM" id="SSF54211">
    <property type="entry name" value="Ribosomal protein S5 domain 2-like"/>
    <property type="match status" value="1"/>
</dbReference>
<dbReference type="SUPFAM" id="SSF50447">
    <property type="entry name" value="Translation proteins"/>
    <property type="match status" value="1"/>
</dbReference>
<dbReference type="PROSITE" id="PS00301">
    <property type="entry name" value="G_TR_1"/>
    <property type="match status" value="1"/>
</dbReference>
<dbReference type="PROSITE" id="PS51722">
    <property type="entry name" value="G_TR_2"/>
    <property type="match status" value="1"/>
</dbReference>
<keyword id="KW-0963">Cytoplasm</keyword>
<keyword id="KW-0251">Elongation factor</keyword>
<keyword id="KW-0342">GTP-binding</keyword>
<keyword id="KW-0547">Nucleotide-binding</keyword>
<keyword id="KW-0648">Protein biosynthesis</keyword>